<proteinExistence type="inferred from homology"/>
<comment type="function">
    <text evidence="1">Catalyzes the dehydration of D-mannonate.</text>
</comment>
<comment type="catalytic activity">
    <reaction evidence="1">
        <text>D-mannonate = 2-dehydro-3-deoxy-D-gluconate + H2O</text>
        <dbReference type="Rhea" id="RHEA:20097"/>
        <dbReference type="ChEBI" id="CHEBI:15377"/>
        <dbReference type="ChEBI" id="CHEBI:17767"/>
        <dbReference type="ChEBI" id="CHEBI:57990"/>
        <dbReference type="EC" id="4.2.1.8"/>
    </reaction>
</comment>
<comment type="cofactor">
    <cofactor evidence="1">
        <name>Fe(2+)</name>
        <dbReference type="ChEBI" id="CHEBI:29033"/>
    </cofactor>
    <cofactor evidence="1">
        <name>Mn(2+)</name>
        <dbReference type="ChEBI" id="CHEBI:29035"/>
    </cofactor>
</comment>
<comment type="pathway">
    <text evidence="1">Carbohydrate metabolism; pentose and glucuronate interconversion.</text>
</comment>
<comment type="similarity">
    <text evidence="1">Belongs to the mannonate dehydratase family.</text>
</comment>
<reference key="1">
    <citation type="submission" date="2008-05" db="EMBL/GenBank/DDBJ databases">
        <title>Complete sequence of Shigella boydii serotype 18 strain BS512.</title>
        <authorList>
            <person name="Rasko D.A."/>
            <person name="Rosovitz M."/>
            <person name="Maurelli A.T."/>
            <person name="Myers G."/>
            <person name="Seshadri R."/>
            <person name="Cer R."/>
            <person name="Jiang L."/>
            <person name="Ravel J."/>
            <person name="Sebastian Y."/>
        </authorList>
    </citation>
    <scope>NUCLEOTIDE SEQUENCE [LARGE SCALE GENOMIC DNA]</scope>
    <source>
        <strain>CDC 3083-94 / BS512</strain>
    </source>
</reference>
<organism>
    <name type="scientific">Shigella boydii serotype 18 (strain CDC 3083-94 / BS512)</name>
    <dbReference type="NCBI Taxonomy" id="344609"/>
    <lineage>
        <taxon>Bacteria</taxon>
        <taxon>Pseudomonadati</taxon>
        <taxon>Pseudomonadota</taxon>
        <taxon>Gammaproteobacteria</taxon>
        <taxon>Enterobacterales</taxon>
        <taxon>Enterobacteriaceae</taxon>
        <taxon>Shigella</taxon>
    </lineage>
</organism>
<dbReference type="EC" id="4.2.1.8" evidence="1"/>
<dbReference type="EMBL" id="CP001063">
    <property type="protein sequence ID" value="ACD07065.1"/>
    <property type="molecule type" value="Genomic_DNA"/>
</dbReference>
<dbReference type="RefSeq" id="WP_000438558.1">
    <property type="nucleotide sequence ID" value="NC_010658.1"/>
</dbReference>
<dbReference type="SMR" id="B2TYW4"/>
<dbReference type="STRING" id="344609.SbBS512_E4792"/>
<dbReference type="KEGG" id="sbc:SbBS512_E4792"/>
<dbReference type="HOGENOM" id="CLU_058621_2_0_6"/>
<dbReference type="UniPathway" id="UPA00246"/>
<dbReference type="Proteomes" id="UP000001030">
    <property type="component" value="Chromosome"/>
</dbReference>
<dbReference type="GO" id="GO:0008198">
    <property type="term" value="F:ferrous iron binding"/>
    <property type="evidence" value="ECO:0007669"/>
    <property type="project" value="TreeGrafter"/>
</dbReference>
<dbReference type="GO" id="GO:0030145">
    <property type="term" value="F:manganese ion binding"/>
    <property type="evidence" value="ECO:0007669"/>
    <property type="project" value="TreeGrafter"/>
</dbReference>
<dbReference type="GO" id="GO:0008927">
    <property type="term" value="F:mannonate dehydratase activity"/>
    <property type="evidence" value="ECO:0007669"/>
    <property type="project" value="UniProtKB-UniRule"/>
</dbReference>
<dbReference type="GO" id="GO:0042840">
    <property type="term" value="P:D-glucuronate catabolic process"/>
    <property type="evidence" value="ECO:0007669"/>
    <property type="project" value="TreeGrafter"/>
</dbReference>
<dbReference type="FunFam" id="3.20.20.150:FF:000004">
    <property type="entry name" value="Mannonate dehydratase"/>
    <property type="match status" value="1"/>
</dbReference>
<dbReference type="FunFam" id="3.20.20.150:FF:000005">
    <property type="entry name" value="Mannonate dehydratase"/>
    <property type="match status" value="1"/>
</dbReference>
<dbReference type="Gene3D" id="3.20.20.150">
    <property type="entry name" value="Divalent-metal-dependent TIM barrel enzymes"/>
    <property type="match status" value="2"/>
</dbReference>
<dbReference type="HAMAP" id="MF_00106">
    <property type="entry name" value="UxuA"/>
    <property type="match status" value="1"/>
</dbReference>
<dbReference type="InterPro" id="IPR004628">
    <property type="entry name" value="Man_deHydtase"/>
</dbReference>
<dbReference type="InterPro" id="IPR036237">
    <property type="entry name" value="Xyl_isomerase-like_sf"/>
</dbReference>
<dbReference type="NCBIfam" id="NF003027">
    <property type="entry name" value="PRK03906.1"/>
    <property type="match status" value="1"/>
</dbReference>
<dbReference type="NCBIfam" id="TIGR00695">
    <property type="entry name" value="uxuA"/>
    <property type="match status" value="1"/>
</dbReference>
<dbReference type="PANTHER" id="PTHR30387">
    <property type="entry name" value="MANNONATE DEHYDRATASE"/>
    <property type="match status" value="1"/>
</dbReference>
<dbReference type="PANTHER" id="PTHR30387:SF2">
    <property type="entry name" value="MANNONATE DEHYDRATASE"/>
    <property type="match status" value="1"/>
</dbReference>
<dbReference type="Pfam" id="PF03786">
    <property type="entry name" value="UxuA"/>
    <property type="match status" value="1"/>
</dbReference>
<dbReference type="PIRSF" id="PIRSF016049">
    <property type="entry name" value="Man_dehyd"/>
    <property type="match status" value="1"/>
</dbReference>
<dbReference type="SUPFAM" id="SSF51658">
    <property type="entry name" value="Xylose isomerase-like"/>
    <property type="match status" value="1"/>
</dbReference>
<name>UXUA_SHIB3</name>
<keyword id="KW-0408">Iron</keyword>
<keyword id="KW-0456">Lyase</keyword>
<keyword id="KW-0464">Manganese</keyword>
<keyword id="KW-1185">Reference proteome</keyword>
<protein>
    <recommendedName>
        <fullName evidence="1">Mannonate dehydratase</fullName>
        <ecNumber evidence="1">4.2.1.8</ecNumber>
    </recommendedName>
    <alternativeName>
        <fullName evidence="1">D-mannonate hydro-lyase</fullName>
    </alternativeName>
</protein>
<accession>B2TYW4</accession>
<gene>
    <name evidence="1" type="primary">uxuA</name>
    <name type="ordered locus">SbBS512_E4792</name>
</gene>
<sequence length="394" mass="44884">MEQTWRWYGPNDLVSLADVRQAGATGVVTALHHIPNGEVWSVEEILKRKAIVEDAGLVWSVVESIPIHEDIKTHTGNYEQWIANYQQTLRNLAQCGIRTVCYNFMPVLDWTRTDLEYVLPDGSKALRFDQIEFAAFEMHILKRPGAEADYTEEEIAQAAERFATMSDEDKARLTRNIIAGLPGAEEGYTLDQFRKHLELYKDIDKAKLRENFAVFLKAIIPVAEEVGVRMAVHPDDPPRPILGLPRIVSTIEDMQWMVDTVNSMANGFTMCTGSYGVRADNDLVDMIKQFGPRIYFTHLRSTMREDNPKTFHEAAHLNSDVDMYEVVKAIVEEEHRRKAEGKEDLIPMRPDHGHQMLDDLKKKTNPGYSAIGRLKGLAEVRGVELAIQRAFFSR</sequence>
<evidence type="ECO:0000255" key="1">
    <source>
        <dbReference type="HAMAP-Rule" id="MF_00106"/>
    </source>
</evidence>
<feature type="chain" id="PRO_1000094225" description="Mannonate dehydratase">
    <location>
        <begin position="1"/>
        <end position="394"/>
    </location>
</feature>